<reference key="1">
    <citation type="journal article" date="2005" name="PLoS Biol.">
        <title>The genomes of Oryza sativa: a history of duplications.</title>
        <authorList>
            <person name="Yu J."/>
            <person name="Wang J."/>
            <person name="Lin W."/>
            <person name="Li S."/>
            <person name="Li H."/>
            <person name="Zhou J."/>
            <person name="Ni P."/>
            <person name="Dong W."/>
            <person name="Hu S."/>
            <person name="Zeng C."/>
            <person name="Zhang J."/>
            <person name="Zhang Y."/>
            <person name="Li R."/>
            <person name="Xu Z."/>
            <person name="Li S."/>
            <person name="Li X."/>
            <person name="Zheng H."/>
            <person name="Cong L."/>
            <person name="Lin L."/>
            <person name="Yin J."/>
            <person name="Geng J."/>
            <person name="Li G."/>
            <person name="Shi J."/>
            <person name="Liu J."/>
            <person name="Lv H."/>
            <person name="Li J."/>
            <person name="Wang J."/>
            <person name="Deng Y."/>
            <person name="Ran L."/>
            <person name="Shi X."/>
            <person name="Wang X."/>
            <person name="Wu Q."/>
            <person name="Li C."/>
            <person name="Ren X."/>
            <person name="Wang J."/>
            <person name="Wang X."/>
            <person name="Li D."/>
            <person name="Liu D."/>
            <person name="Zhang X."/>
            <person name="Ji Z."/>
            <person name="Zhao W."/>
            <person name="Sun Y."/>
            <person name="Zhang Z."/>
            <person name="Bao J."/>
            <person name="Han Y."/>
            <person name="Dong L."/>
            <person name="Ji J."/>
            <person name="Chen P."/>
            <person name="Wu S."/>
            <person name="Liu J."/>
            <person name="Xiao Y."/>
            <person name="Bu D."/>
            <person name="Tan J."/>
            <person name="Yang L."/>
            <person name="Ye C."/>
            <person name="Zhang J."/>
            <person name="Xu J."/>
            <person name="Zhou Y."/>
            <person name="Yu Y."/>
            <person name="Zhang B."/>
            <person name="Zhuang S."/>
            <person name="Wei H."/>
            <person name="Liu B."/>
            <person name="Lei M."/>
            <person name="Yu H."/>
            <person name="Li Y."/>
            <person name="Xu H."/>
            <person name="Wei S."/>
            <person name="He X."/>
            <person name="Fang L."/>
            <person name="Zhang Z."/>
            <person name="Zhang Y."/>
            <person name="Huang X."/>
            <person name="Su Z."/>
            <person name="Tong W."/>
            <person name="Li J."/>
            <person name="Tong Z."/>
            <person name="Li S."/>
            <person name="Ye J."/>
            <person name="Wang L."/>
            <person name="Fang L."/>
            <person name="Lei T."/>
            <person name="Chen C.-S."/>
            <person name="Chen H.-C."/>
            <person name="Xu Z."/>
            <person name="Li H."/>
            <person name="Huang H."/>
            <person name="Zhang F."/>
            <person name="Xu H."/>
            <person name="Li N."/>
            <person name="Zhao C."/>
            <person name="Li S."/>
            <person name="Dong L."/>
            <person name="Huang Y."/>
            <person name="Li L."/>
            <person name="Xi Y."/>
            <person name="Qi Q."/>
            <person name="Li W."/>
            <person name="Zhang B."/>
            <person name="Hu W."/>
            <person name="Zhang Y."/>
            <person name="Tian X."/>
            <person name="Jiao Y."/>
            <person name="Liang X."/>
            <person name="Jin J."/>
            <person name="Gao L."/>
            <person name="Zheng W."/>
            <person name="Hao B."/>
            <person name="Liu S.-M."/>
            <person name="Wang W."/>
            <person name="Yuan L."/>
            <person name="Cao M."/>
            <person name="McDermott J."/>
            <person name="Samudrala R."/>
            <person name="Wang J."/>
            <person name="Wong G.K.-S."/>
            <person name="Yang H."/>
        </authorList>
    </citation>
    <scope>NUCLEOTIDE SEQUENCE [LARGE SCALE GENOMIC DNA]</scope>
    <source>
        <strain>cv. 93-11</strain>
    </source>
</reference>
<reference key="2">
    <citation type="submission" date="2003-07" db="UniProtKB">
        <title>Proteome analysis of rice anther.</title>
        <authorList>
            <person name="Salekdeh G.H."/>
            <person name="Bennett J."/>
        </authorList>
    </citation>
    <scope>PROTEIN SEQUENCE OF 79-92</scope>
    <source>
        <strain>cv. IR64</strain>
        <tissue>Anther</tissue>
    </source>
</reference>
<keyword id="KW-0903">Direct protein sequencing</keyword>
<keyword id="KW-1185">Reference proteome</keyword>
<evidence type="ECO:0000305" key="1"/>
<name>Y2550_ORYSI</name>
<feature type="chain" id="PRO_0000280230" description="Uncharacterized protein OsI_009113">
    <location>
        <begin position="1"/>
        <end position="129"/>
    </location>
</feature>
<feature type="sequence conflict" description="In Ref. 2; AA sequence." evidence="1" ref="2">
    <original>F</original>
    <variation>FA</variation>
    <location>
        <position position="82"/>
    </location>
</feature>
<feature type="sequence conflict" description="In Ref. 2; AA sequence." evidence="1" ref="2">
    <original>E</original>
    <variation>EA</variation>
    <location>
        <position position="86"/>
    </location>
</feature>
<feature type="sequence conflict" description="In Ref. 2; AA sequence." evidence="1" ref="2">
    <original>NA</original>
    <variation>AN</variation>
    <location>
        <begin position="88"/>
        <end position="89"/>
    </location>
</feature>
<sequence>MAQNKTIAVALLLATLVAVMGKEPETLEETLRAGCKEECSEQKKKAPIDEKQCEDFCFIKTKSIFEAHKGVKDLKADRFIDFCNNECNAVYKEDPATSKKCAESCEADAKEAEVFLDKVVAYMQTMKQA</sequence>
<comment type="miscellaneous">
    <text>On the 2D-gel the determined pI of this unknown protein is: 5.1, its MW is: 18 kDa.</text>
</comment>
<accession>A2XAM0</accession>
<accession>P83635</accession>
<dbReference type="EMBL" id="CM000127">
    <property type="protein sequence ID" value="EAY87880.1"/>
    <property type="molecule type" value="Genomic_DNA"/>
</dbReference>
<dbReference type="EnsemblPlants" id="BGIOSGA005429-TA">
    <property type="protein sequence ID" value="BGIOSGA005429-PA"/>
    <property type="gene ID" value="BGIOSGA005429"/>
</dbReference>
<dbReference type="EnsemblPlants" id="OsIR64_02g0036650.01">
    <property type="protein sequence ID" value="OsIR64_02g0036650.01"/>
    <property type="gene ID" value="OsIR64_02g0036650"/>
</dbReference>
<dbReference type="EnsemblPlants" id="OsIR64_02g0036660.01">
    <property type="protein sequence ID" value="OsIR64_02g0036660.01"/>
    <property type="gene ID" value="OsIR64_02g0036660"/>
</dbReference>
<dbReference type="EnsemblPlants" id="OsKYG_02g0036730.01">
    <property type="protein sequence ID" value="OsKYG_02g0036730.01"/>
    <property type="gene ID" value="OsKYG_02g0036730"/>
</dbReference>
<dbReference type="EnsemblPlants" id="OsLaMu_02g0036550.01">
    <property type="protein sequence ID" value="OsLaMu_02g0036550.01"/>
    <property type="gene ID" value="OsLaMu_02g0036550"/>
</dbReference>
<dbReference type="EnsemblPlants" id="OsLiXu_02g0036950.01">
    <property type="protein sequence ID" value="OsLiXu_02g0036950.01"/>
    <property type="gene ID" value="OsLiXu_02g0036950"/>
</dbReference>
<dbReference type="EnsemblPlants" id="OsMH63_02G037210_01">
    <property type="protein sequence ID" value="OsMH63_02G037210_01"/>
    <property type="gene ID" value="OsMH63_02G037210"/>
</dbReference>
<dbReference type="EnsemblPlants" id="OsZS97_02G036510_01">
    <property type="protein sequence ID" value="OsZS97_02G036510_01"/>
    <property type="gene ID" value="OsZS97_02G036510"/>
</dbReference>
<dbReference type="Gramene" id="BGIOSGA005429-TA">
    <property type="protein sequence ID" value="BGIOSGA005429-PA"/>
    <property type="gene ID" value="BGIOSGA005429"/>
</dbReference>
<dbReference type="Gramene" id="OsIR64_02g0036650.01">
    <property type="protein sequence ID" value="OsIR64_02g0036650.01"/>
    <property type="gene ID" value="OsIR64_02g0036650"/>
</dbReference>
<dbReference type="Gramene" id="OsIR64_02g0036660.01">
    <property type="protein sequence ID" value="OsIR64_02g0036660.01"/>
    <property type="gene ID" value="OsIR64_02g0036660"/>
</dbReference>
<dbReference type="Gramene" id="OsKYG_02g0036730.01">
    <property type="protein sequence ID" value="OsKYG_02g0036730.01"/>
    <property type="gene ID" value="OsKYG_02g0036730"/>
</dbReference>
<dbReference type="Gramene" id="OsLaMu_02g0036550.01">
    <property type="protein sequence ID" value="OsLaMu_02g0036550.01"/>
    <property type="gene ID" value="OsLaMu_02g0036550"/>
</dbReference>
<dbReference type="Gramene" id="OsLiXu_02g0036950.01">
    <property type="protein sequence ID" value="OsLiXu_02g0036950.01"/>
    <property type="gene ID" value="OsLiXu_02g0036950"/>
</dbReference>
<dbReference type="Gramene" id="OsMH63_02G037210_01">
    <property type="protein sequence ID" value="OsMH63_02G037210_01"/>
    <property type="gene ID" value="OsMH63_02G037210"/>
</dbReference>
<dbReference type="Gramene" id="OsZS97_02G036510_01">
    <property type="protein sequence ID" value="OsZS97_02G036510_01"/>
    <property type="gene ID" value="OsZS97_02G036510"/>
</dbReference>
<dbReference type="HOGENOM" id="CLU_160271_0_0_1"/>
<dbReference type="OMA" id="KCAESCE"/>
<dbReference type="Proteomes" id="UP000007015">
    <property type="component" value="Chromosome 2"/>
</dbReference>
<protein>
    <recommendedName>
        <fullName>Uncharacterized protein OsI_009113</fullName>
    </recommendedName>
    <alternativeName>
        <fullName>Unknown protein AN04 from 2D-PAGE of anther</fullName>
    </alternativeName>
</protein>
<proteinExistence type="evidence at protein level"/>
<organism>
    <name type="scientific">Oryza sativa subsp. indica</name>
    <name type="common">Rice</name>
    <dbReference type="NCBI Taxonomy" id="39946"/>
    <lineage>
        <taxon>Eukaryota</taxon>
        <taxon>Viridiplantae</taxon>
        <taxon>Streptophyta</taxon>
        <taxon>Embryophyta</taxon>
        <taxon>Tracheophyta</taxon>
        <taxon>Spermatophyta</taxon>
        <taxon>Magnoliopsida</taxon>
        <taxon>Liliopsida</taxon>
        <taxon>Poales</taxon>
        <taxon>Poaceae</taxon>
        <taxon>BOP clade</taxon>
        <taxon>Oryzoideae</taxon>
        <taxon>Oryzeae</taxon>
        <taxon>Oryzinae</taxon>
        <taxon>Oryza</taxon>
        <taxon>Oryza sativa</taxon>
    </lineage>
</organism>
<gene>
    <name type="ORF">OsI_009113</name>
</gene>